<feature type="chain" id="PRO_1000116229" description="Adenine phosphoribosyltransferase">
    <location>
        <begin position="1"/>
        <end position="170"/>
    </location>
</feature>
<organism>
    <name type="scientific">Bacillus anthracis (strain CDC 684 / NRRL 3495)</name>
    <dbReference type="NCBI Taxonomy" id="568206"/>
    <lineage>
        <taxon>Bacteria</taxon>
        <taxon>Bacillati</taxon>
        <taxon>Bacillota</taxon>
        <taxon>Bacilli</taxon>
        <taxon>Bacillales</taxon>
        <taxon>Bacillaceae</taxon>
        <taxon>Bacillus</taxon>
        <taxon>Bacillus cereus group</taxon>
    </lineage>
</organism>
<name>APT_BACAC</name>
<comment type="function">
    <text evidence="1">Catalyzes a salvage reaction resulting in the formation of AMP, that is energically less costly than de novo synthesis.</text>
</comment>
<comment type="catalytic activity">
    <reaction evidence="1">
        <text>AMP + diphosphate = 5-phospho-alpha-D-ribose 1-diphosphate + adenine</text>
        <dbReference type="Rhea" id="RHEA:16609"/>
        <dbReference type="ChEBI" id="CHEBI:16708"/>
        <dbReference type="ChEBI" id="CHEBI:33019"/>
        <dbReference type="ChEBI" id="CHEBI:58017"/>
        <dbReference type="ChEBI" id="CHEBI:456215"/>
        <dbReference type="EC" id="2.4.2.7"/>
    </reaction>
</comment>
<comment type="pathway">
    <text evidence="1">Purine metabolism; AMP biosynthesis via salvage pathway; AMP from adenine: step 1/1.</text>
</comment>
<comment type="subunit">
    <text evidence="1">Homodimer.</text>
</comment>
<comment type="subcellular location">
    <subcellularLocation>
        <location evidence="1">Cytoplasm</location>
    </subcellularLocation>
</comment>
<comment type="similarity">
    <text evidence="1">Belongs to the purine/pyrimidine phosphoribosyltransferase family.</text>
</comment>
<proteinExistence type="inferred from homology"/>
<protein>
    <recommendedName>
        <fullName evidence="1">Adenine phosphoribosyltransferase</fullName>
        <shortName evidence="1">APRT</shortName>
        <ecNumber evidence="1">2.4.2.7</ecNumber>
    </recommendedName>
</protein>
<accession>C3L613</accession>
<gene>
    <name evidence="1" type="primary">apt</name>
    <name type="ordered locus">BAMEG_4672</name>
</gene>
<sequence>MDFKQHIAIVPDYPKEGIVFKDITPLMNDGKAYKAATDAIVEYAKERDIDLVVGPEARGFIIGCPVSYALEVGFAPVRKLGKLPREVITVDYGKEYGKDVLTIHKDAIKPGQRVLITDDLLATGGTIEATIKLVEELGGVVAGIAFLVELTYLDGRKMLDGYDVLVLEKY</sequence>
<keyword id="KW-0963">Cytoplasm</keyword>
<keyword id="KW-0328">Glycosyltransferase</keyword>
<keyword id="KW-0660">Purine salvage</keyword>
<keyword id="KW-0808">Transferase</keyword>
<reference key="1">
    <citation type="submission" date="2008-10" db="EMBL/GenBank/DDBJ databases">
        <title>Genome sequence of Bacillus anthracis str. CDC 684.</title>
        <authorList>
            <person name="Dodson R.J."/>
            <person name="Munk A.C."/>
            <person name="Brettin T."/>
            <person name="Bruce D."/>
            <person name="Detter C."/>
            <person name="Tapia R."/>
            <person name="Han C."/>
            <person name="Sutton G."/>
            <person name="Sims D."/>
        </authorList>
    </citation>
    <scope>NUCLEOTIDE SEQUENCE [LARGE SCALE GENOMIC DNA]</scope>
    <source>
        <strain>CDC 684 / NRRL 3495</strain>
    </source>
</reference>
<dbReference type="EC" id="2.4.2.7" evidence="1"/>
<dbReference type="EMBL" id="CP001215">
    <property type="protein sequence ID" value="ACP12303.1"/>
    <property type="molecule type" value="Genomic_DNA"/>
</dbReference>
<dbReference type="RefSeq" id="WP_000346214.1">
    <property type="nucleotide sequence ID" value="NC_012581.1"/>
</dbReference>
<dbReference type="SMR" id="C3L613"/>
<dbReference type="KEGG" id="bah:BAMEG_4672"/>
<dbReference type="HOGENOM" id="CLU_063339_3_0_9"/>
<dbReference type="UniPathway" id="UPA00588">
    <property type="reaction ID" value="UER00646"/>
</dbReference>
<dbReference type="GO" id="GO:0005737">
    <property type="term" value="C:cytoplasm"/>
    <property type="evidence" value="ECO:0007669"/>
    <property type="project" value="UniProtKB-SubCell"/>
</dbReference>
<dbReference type="GO" id="GO:0002055">
    <property type="term" value="F:adenine binding"/>
    <property type="evidence" value="ECO:0007669"/>
    <property type="project" value="TreeGrafter"/>
</dbReference>
<dbReference type="GO" id="GO:0003999">
    <property type="term" value="F:adenine phosphoribosyltransferase activity"/>
    <property type="evidence" value="ECO:0007669"/>
    <property type="project" value="UniProtKB-UniRule"/>
</dbReference>
<dbReference type="GO" id="GO:0016208">
    <property type="term" value="F:AMP binding"/>
    <property type="evidence" value="ECO:0007669"/>
    <property type="project" value="TreeGrafter"/>
</dbReference>
<dbReference type="GO" id="GO:0006168">
    <property type="term" value="P:adenine salvage"/>
    <property type="evidence" value="ECO:0007669"/>
    <property type="project" value="InterPro"/>
</dbReference>
<dbReference type="GO" id="GO:0044209">
    <property type="term" value="P:AMP salvage"/>
    <property type="evidence" value="ECO:0007669"/>
    <property type="project" value="UniProtKB-UniRule"/>
</dbReference>
<dbReference type="GO" id="GO:0006166">
    <property type="term" value="P:purine ribonucleoside salvage"/>
    <property type="evidence" value="ECO:0007669"/>
    <property type="project" value="UniProtKB-KW"/>
</dbReference>
<dbReference type="CDD" id="cd06223">
    <property type="entry name" value="PRTases_typeI"/>
    <property type="match status" value="1"/>
</dbReference>
<dbReference type="FunFam" id="3.40.50.2020:FF:000004">
    <property type="entry name" value="Adenine phosphoribosyltransferase"/>
    <property type="match status" value="1"/>
</dbReference>
<dbReference type="Gene3D" id="3.40.50.2020">
    <property type="match status" value="1"/>
</dbReference>
<dbReference type="HAMAP" id="MF_00004">
    <property type="entry name" value="Aden_phosphoribosyltr"/>
    <property type="match status" value="1"/>
</dbReference>
<dbReference type="InterPro" id="IPR005764">
    <property type="entry name" value="Ade_phspho_trans"/>
</dbReference>
<dbReference type="InterPro" id="IPR000836">
    <property type="entry name" value="PRibTrfase_dom"/>
</dbReference>
<dbReference type="InterPro" id="IPR029057">
    <property type="entry name" value="PRTase-like"/>
</dbReference>
<dbReference type="InterPro" id="IPR050054">
    <property type="entry name" value="UPRTase/APRTase"/>
</dbReference>
<dbReference type="NCBIfam" id="TIGR01090">
    <property type="entry name" value="apt"/>
    <property type="match status" value="1"/>
</dbReference>
<dbReference type="NCBIfam" id="NF002633">
    <property type="entry name" value="PRK02304.1-2"/>
    <property type="match status" value="1"/>
</dbReference>
<dbReference type="NCBIfam" id="NF002634">
    <property type="entry name" value="PRK02304.1-3"/>
    <property type="match status" value="1"/>
</dbReference>
<dbReference type="NCBIfam" id="NF002636">
    <property type="entry name" value="PRK02304.1-5"/>
    <property type="match status" value="1"/>
</dbReference>
<dbReference type="PANTHER" id="PTHR32315">
    <property type="entry name" value="ADENINE PHOSPHORIBOSYLTRANSFERASE"/>
    <property type="match status" value="1"/>
</dbReference>
<dbReference type="PANTHER" id="PTHR32315:SF3">
    <property type="entry name" value="ADENINE PHOSPHORIBOSYLTRANSFERASE"/>
    <property type="match status" value="1"/>
</dbReference>
<dbReference type="Pfam" id="PF00156">
    <property type="entry name" value="Pribosyltran"/>
    <property type="match status" value="1"/>
</dbReference>
<dbReference type="SUPFAM" id="SSF53271">
    <property type="entry name" value="PRTase-like"/>
    <property type="match status" value="1"/>
</dbReference>
<evidence type="ECO:0000255" key="1">
    <source>
        <dbReference type="HAMAP-Rule" id="MF_00004"/>
    </source>
</evidence>